<gene>
    <name evidence="1" type="primary">bamA</name>
    <name type="synonym">yaeT</name>
    <name type="ordered locus">YPN_2948</name>
    <name type="ORF">YP516_3338</name>
</gene>
<comment type="function">
    <text evidence="1">Part of the outer membrane protein assembly complex, which is involved in assembly and insertion of beta-barrel proteins into the outer membrane. Constitutes, with BamD, the core component of the assembly machinery.</text>
</comment>
<comment type="subunit">
    <text evidence="1">Part of the Bam complex, which is composed of the outer membrane protein BamA, and four lipoproteins BamB, BamC, BamD and BamE.</text>
</comment>
<comment type="subcellular location">
    <subcellularLocation>
        <location evidence="1">Cell outer membrane</location>
    </subcellularLocation>
</comment>
<comment type="similarity">
    <text evidence="1">Belongs to the BamA family.</text>
</comment>
<reference key="1">
    <citation type="journal article" date="2006" name="J. Bacteriol.">
        <title>Complete genome sequence of Yersinia pestis strains Antiqua and Nepal516: evidence of gene reduction in an emerging pathogen.</title>
        <authorList>
            <person name="Chain P.S.G."/>
            <person name="Hu P."/>
            <person name="Malfatti S.A."/>
            <person name="Radnedge L."/>
            <person name="Larimer F."/>
            <person name="Vergez L.M."/>
            <person name="Worsham P."/>
            <person name="Chu M.C."/>
            <person name="Andersen G.L."/>
        </authorList>
    </citation>
    <scope>NUCLEOTIDE SEQUENCE [LARGE SCALE GENOMIC DNA]</scope>
    <source>
        <strain>Nepal516</strain>
    </source>
</reference>
<reference key="2">
    <citation type="submission" date="2009-04" db="EMBL/GenBank/DDBJ databases">
        <title>Yersinia pestis Nepal516A whole genome shotgun sequencing project.</title>
        <authorList>
            <person name="Plunkett G. III"/>
            <person name="Anderson B.D."/>
            <person name="Baumler D.J."/>
            <person name="Burland V."/>
            <person name="Cabot E.L."/>
            <person name="Glasner J.D."/>
            <person name="Mau B."/>
            <person name="Neeno-Eckwall E."/>
            <person name="Perna N.T."/>
            <person name="Munk A.C."/>
            <person name="Tapia R."/>
            <person name="Green L.D."/>
            <person name="Rogers Y.C."/>
            <person name="Detter J.C."/>
            <person name="Bruce D.C."/>
            <person name="Brettin T.S."/>
        </authorList>
    </citation>
    <scope>NUCLEOTIDE SEQUENCE [LARGE SCALE GENOMIC DNA]</scope>
    <source>
        <strain>Nepal516</strain>
    </source>
</reference>
<sequence>MAMKKLLIASLLFGSATVYGADGFVVNDIHFEGLQRVAVGAALLNMPVRVGDTVSDDDIGKTIRALFATGNFEDVRVLRDGNTLIVQVKERPTIASITFSGNKAVKEDMLKQNLEASGVRVGEALDRTTISNIEKGLEDFYYSVGKYSASVKAVVTPLPRNRVDLKLVFTEGVSAKIQQINIVGNHSFTTDELISRFQLRDEVPWWNVVGDRKYQKQKLAGDLETLRSFYLDRGYARFNIDSTQVSLTPDKKGIYVTINITEGPQFKLNSVIVSGNLAGHQSEAEKLTKIEPGELFNGSKVTRMEDDIKKMLGRYGYAYPRVVTQPEINDDDKTVKLHINVDAGNRFYVRHIRFEGNDTSKDSVLRREMRQMEGAWLGNDQVEAGKERLNRLGYFETVDVETQRVPGAADLVDVTYKVKERNTGSLNFGIGYGTESGVSFQVGVQQDNWLGTGNTVGINGTKNDYQTYAEFTLMDPYFTVDGVSLGGRIFYNDFKADNADLSGYTNSSYGADGTLGFPINENNSLRVGVGYVHNDLSDMLPQVAMWRYLESVGERPGYDGREGFTTDDFTLNLGWTYNNLDRGFFPTSGVKSSVNTKITVPGSDNEFYKVTFDTSAYQPLNEDRSWVLLGRGRLGYGDGIGSKEMPFYENFYAGGSSTVRGFRSNNIGPKAAYYANGGATVTNSTDAVGGNAMAVASIELITPTPFISEKYSNSVRTSIFIDSGTVWDTNWENTAKTRAAGIPDYGKASNIRVSAGVALQWMSPLGPLVFSYAKPVKDYEGDKSEQFQFNIGKTW</sequence>
<evidence type="ECO:0000255" key="1">
    <source>
        <dbReference type="HAMAP-Rule" id="MF_01430"/>
    </source>
</evidence>
<evidence type="ECO:0000255" key="2">
    <source>
        <dbReference type="PROSITE-ProRule" id="PRU01115"/>
    </source>
</evidence>
<accession>Q1CFF5</accession>
<accession>C4GWX4</accession>
<organism>
    <name type="scientific">Yersinia pestis bv. Antiqua (strain Nepal516)</name>
    <dbReference type="NCBI Taxonomy" id="377628"/>
    <lineage>
        <taxon>Bacteria</taxon>
        <taxon>Pseudomonadati</taxon>
        <taxon>Pseudomonadota</taxon>
        <taxon>Gammaproteobacteria</taxon>
        <taxon>Enterobacterales</taxon>
        <taxon>Yersiniaceae</taxon>
        <taxon>Yersinia</taxon>
    </lineage>
</organism>
<protein>
    <recommendedName>
        <fullName evidence="1">Outer membrane protein assembly factor BamA</fullName>
    </recommendedName>
</protein>
<dbReference type="EMBL" id="CP000305">
    <property type="protein sequence ID" value="ABG19275.1"/>
    <property type="molecule type" value="Genomic_DNA"/>
</dbReference>
<dbReference type="EMBL" id="ACNQ01000017">
    <property type="protein sequence ID" value="EEO75424.1"/>
    <property type="molecule type" value="Genomic_DNA"/>
</dbReference>
<dbReference type="RefSeq" id="WP_002212139.1">
    <property type="nucleotide sequence ID" value="NZ_ACNQ01000017.1"/>
</dbReference>
<dbReference type="SMR" id="Q1CFF5"/>
<dbReference type="GeneID" id="57977509"/>
<dbReference type="KEGG" id="ypn:YPN_2948"/>
<dbReference type="HOGENOM" id="CLU_007664_1_0_6"/>
<dbReference type="Proteomes" id="UP000008936">
    <property type="component" value="Chromosome"/>
</dbReference>
<dbReference type="GO" id="GO:1990063">
    <property type="term" value="C:Bam protein complex"/>
    <property type="evidence" value="ECO:0007669"/>
    <property type="project" value="TreeGrafter"/>
</dbReference>
<dbReference type="GO" id="GO:0043165">
    <property type="term" value="P:Gram-negative-bacterium-type cell outer membrane assembly"/>
    <property type="evidence" value="ECO:0007669"/>
    <property type="project" value="UniProtKB-UniRule"/>
</dbReference>
<dbReference type="GO" id="GO:0051205">
    <property type="term" value="P:protein insertion into membrane"/>
    <property type="evidence" value="ECO:0007669"/>
    <property type="project" value="UniProtKB-UniRule"/>
</dbReference>
<dbReference type="FunFam" id="2.40.160.50:FF:000001">
    <property type="entry name" value="Outer membrane protein assembly factor BamA"/>
    <property type="match status" value="1"/>
</dbReference>
<dbReference type="FunFam" id="3.10.20.310:FF:000001">
    <property type="entry name" value="Outer membrane protein assembly factor BamA"/>
    <property type="match status" value="1"/>
</dbReference>
<dbReference type="FunFam" id="3.10.20.310:FF:000002">
    <property type="entry name" value="Outer membrane protein assembly factor BamA"/>
    <property type="match status" value="1"/>
</dbReference>
<dbReference type="FunFam" id="3.10.20.310:FF:000003">
    <property type="entry name" value="Outer membrane protein assembly factor BamA"/>
    <property type="match status" value="1"/>
</dbReference>
<dbReference type="FunFam" id="3.10.20.310:FF:000004">
    <property type="entry name" value="Outer membrane protein assembly factor BamA"/>
    <property type="match status" value="1"/>
</dbReference>
<dbReference type="FunFam" id="3.10.20.310:FF:000005">
    <property type="entry name" value="Outer membrane protein assembly factor BamA"/>
    <property type="match status" value="1"/>
</dbReference>
<dbReference type="Gene3D" id="3.10.20.310">
    <property type="entry name" value="membrane protein fhac"/>
    <property type="match status" value="5"/>
</dbReference>
<dbReference type="Gene3D" id="2.40.160.50">
    <property type="entry name" value="membrane protein fhac: a member of the omp85/tpsb transporter family"/>
    <property type="match status" value="1"/>
</dbReference>
<dbReference type="HAMAP" id="MF_01430">
    <property type="entry name" value="OM_assembly_BamA"/>
    <property type="match status" value="1"/>
</dbReference>
<dbReference type="InterPro" id="IPR000184">
    <property type="entry name" value="Bac_surfAg_D15"/>
</dbReference>
<dbReference type="InterPro" id="IPR010827">
    <property type="entry name" value="BamA/TamA_POTRA"/>
</dbReference>
<dbReference type="InterPro" id="IPR039910">
    <property type="entry name" value="D15-like"/>
</dbReference>
<dbReference type="InterPro" id="IPR023707">
    <property type="entry name" value="OM_assembly_BamA"/>
</dbReference>
<dbReference type="InterPro" id="IPR034746">
    <property type="entry name" value="POTRA"/>
</dbReference>
<dbReference type="NCBIfam" id="TIGR03303">
    <property type="entry name" value="OM_YaeT"/>
    <property type="match status" value="1"/>
</dbReference>
<dbReference type="NCBIfam" id="NF008287">
    <property type="entry name" value="PRK11067.1"/>
    <property type="match status" value="1"/>
</dbReference>
<dbReference type="PANTHER" id="PTHR12815:SF23">
    <property type="entry name" value="OUTER MEMBRANE PROTEIN ASSEMBLY FACTOR BAMA"/>
    <property type="match status" value="1"/>
</dbReference>
<dbReference type="PANTHER" id="PTHR12815">
    <property type="entry name" value="SORTING AND ASSEMBLY MACHINERY SAMM50 PROTEIN FAMILY MEMBER"/>
    <property type="match status" value="1"/>
</dbReference>
<dbReference type="Pfam" id="PF01103">
    <property type="entry name" value="Omp85"/>
    <property type="match status" value="1"/>
</dbReference>
<dbReference type="Pfam" id="PF07244">
    <property type="entry name" value="POTRA"/>
    <property type="match status" value="4"/>
</dbReference>
<dbReference type="PIRSF" id="PIRSF006076">
    <property type="entry name" value="OM_assembly_OMP85"/>
    <property type="match status" value="1"/>
</dbReference>
<dbReference type="PROSITE" id="PS51779">
    <property type="entry name" value="POTRA"/>
    <property type="match status" value="5"/>
</dbReference>
<feature type="signal peptide" evidence="1">
    <location>
        <begin position="1"/>
        <end position="20"/>
    </location>
</feature>
<feature type="chain" id="PRO_5000115528" description="Outer membrane protein assembly factor BamA">
    <location>
        <begin position="21"/>
        <end position="795"/>
    </location>
</feature>
<feature type="domain" description="POTRA 1" evidence="2">
    <location>
        <begin position="24"/>
        <end position="91"/>
    </location>
</feature>
<feature type="domain" description="POTRA 2" evidence="2">
    <location>
        <begin position="92"/>
        <end position="172"/>
    </location>
</feature>
<feature type="domain" description="POTRA 3" evidence="2">
    <location>
        <begin position="175"/>
        <end position="263"/>
    </location>
</feature>
<feature type="domain" description="POTRA 4" evidence="2">
    <location>
        <begin position="266"/>
        <end position="344"/>
    </location>
</feature>
<feature type="domain" description="POTRA 5" evidence="2">
    <location>
        <begin position="347"/>
        <end position="421"/>
    </location>
</feature>
<proteinExistence type="inferred from homology"/>
<name>BAMA_YERPN</name>
<keyword id="KW-0998">Cell outer membrane</keyword>
<keyword id="KW-0472">Membrane</keyword>
<keyword id="KW-0677">Repeat</keyword>
<keyword id="KW-0732">Signal</keyword>
<keyword id="KW-0812">Transmembrane</keyword>
<keyword id="KW-1134">Transmembrane beta strand</keyword>